<name>BUD32_CANGA</name>
<reference key="1">
    <citation type="journal article" date="2004" name="Nature">
        <title>Genome evolution in yeasts.</title>
        <authorList>
            <person name="Dujon B."/>
            <person name="Sherman D."/>
            <person name="Fischer G."/>
            <person name="Durrens P."/>
            <person name="Casaregola S."/>
            <person name="Lafontaine I."/>
            <person name="de Montigny J."/>
            <person name="Marck C."/>
            <person name="Neuveglise C."/>
            <person name="Talla E."/>
            <person name="Goffard N."/>
            <person name="Frangeul L."/>
            <person name="Aigle M."/>
            <person name="Anthouard V."/>
            <person name="Babour A."/>
            <person name="Barbe V."/>
            <person name="Barnay S."/>
            <person name="Blanchin S."/>
            <person name="Beckerich J.-M."/>
            <person name="Beyne E."/>
            <person name="Bleykasten C."/>
            <person name="Boisrame A."/>
            <person name="Boyer J."/>
            <person name="Cattolico L."/>
            <person name="Confanioleri F."/>
            <person name="de Daruvar A."/>
            <person name="Despons L."/>
            <person name="Fabre E."/>
            <person name="Fairhead C."/>
            <person name="Ferry-Dumazet H."/>
            <person name="Groppi A."/>
            <person name="Hantraye F."/>
            <person name="Hennequin C."/>
            <person name="Jauniaux N."/>
            <person name="Joyet P."/>
            <person name="Kachouri R."/>
            <person name="Kerrest A."/>
            <person name="Koszul R."/>
            <person name="Lemaire M."/>
            <person name="Lesur I."/>
            <person name="Ma L."/>
            <person name="Muller H."/>
            <person name="Nicaud J.-M."/>
            <person name="Nikolski M."/>
            <person name="Oztas S."/>
            <person name="Ozier-Kalogeropoulos O."/>
            <person name="Pellenz S."/>
            <person name="Potier S."/>
            <person name="Richard G.-F."/>
            <person name="Straub M.-L."/>
            <person name="Suleau A."/>
            <person name="Swennen D."/>
            <person name="Tekaia F."/>
            <person name="Wesolowski-Louvel M."/>
            <person name="Westhof E."/>
            <person name="Wirth B."/>
            <person name="Zeniou-Meyer M."/>
            <person name="Zivanovic Y."/>
            <person name="Bolotin-Fukuhara M."/>
            <person name="Thierry A."/>
            <person name="Bouchier C."/>
            <person name="Caudron B."/>
            <person name="Scarpelli C."/>
            <person name="Gaillardin C."/>
            <person name="Weissenbach J."/>
            <person name="Wincker P."/>
            <person name="Souciet J.-L."/>
        </authorList>
    </citation>
    <scope>NUCLEOTIDE SEQUENCE [LARGE SCALE GENOMIC DNA]</scope>
    <source>
        <strain>ATCC 2001 / BCRC 20586 / JCM 3761 / NBRC 0622 / NRRL Y-65 / CBS 138</strain>
    </source>
</reference>
<feature type="chain" id="PRO_0000278909" description="EKC/KEOPS complex subunit BUD32">
    <location>
        <begin position="1"/>
        <end position="266"/>
    </location>
</feature>
<feature type="domain" description="Protein kinase" evidence="3">
    <location>
        <begin position="16"/>
        <end position="266"/>
    </location>
</feature>
<feature type="active site" description="Proton acceptor" evidence="3 4">
    <location>
        <position position="163"/>
    </location>
</feature>
<feature type="binding site" evidence="3">
    <location>
        <begin position="22"/>
        <end position="30"/>
    </location>
    <ligand>
        <name>ATP</name>
        <dbReference type="ChEBI" id="CHEBI:30616"/>
    </ligand>
</feature>
<feature type="binding site" evidence="3">
    <location>
        <position position="52"/>
    </location>
    <ligand>
        <name>ATP</name>
        <dbReference type="ChEBI" id="CHEBI:30616"/>
    </ligand>
</feature>
<gene>
    <name type="primary">BUD32</name>
    <name type="ordered locus">CAGL0F08415g</name>
</gene>
<dbReference type="EC" id="3.6.-.-" evidence="2"/>
<dbReference type="EC" id="2.7.11.1" evidence="1"/>
<dbReference type="EMBL" id="CR380952">
    <property type="protein sequence ID" value="CAG59258.1"/>
    <property type="molecule type" value="Genomic_DNA"/>
</dbReference>
<dbReference type="RefSeq" id="XP_446334.1">
    <property type="nucleotide sequence ID" value="XM_446334.1"/>
</dbReference>
<dbReference type="SMR" id="Q6FTW0"/>
<dbReference type="FunCoup" id="Q6FTW0">
    <property type="interactions" value="929"/>
</dbReference>
<dbReference type="STRING" id="284593.Q6FTW0"/>
<dbReference type="EnsemblFungi" id="CAGL0F08415g-T">
    <property type="protein sequence ID" value="CAGL0F08415g-T-p1"/>
    <property type="gene ID" value="CAGL0F08415g"/>
</dbReference>
<dbReference type="KEGG" id="cgr:2887568"/>
<dbReference type="CGD" id="CAL0131008">
    <property type="gene designation" value="CAGL0F08415g"/>
</dbReference>
<dbReference type="VEuPathDB" id="FungiDB:CAGL0F08415g"/>
<dbReference type="eggNOG" id="KOG3087">
    <property type="taxonomic scope" value="Eukaryota"/>
</dbReference>
<dbReference type="HOGENOM" id="CLU_063953_1_1_1"/>
<dbReference type="InParanoid" id="Q6FTW0"/>
<dbReference type="OMA" id="HKLYMEY"/>
<dbReference type="Proteomes" id="UP000002428">
    <property type="component" value="Chromosome F"/>
</dbReference>
<dbReference type="GO" id="GO:0000781">
    <property type="term" value="C:chromosome, telomeric region"/>
    <property type="evidence" value="ECO:0007669"/>
    <property type="project" value="UniProtKB-SubCell"/>
</dbReference>
<dbReference type="GO" id="GO:0005829">
    <property type="term" value="C:cytosol"/>
    <property type="evidence" value="ECO:0007669"/>
    <property type="project" value="TreeGrafter"/>
</dbReference>
<dbReference type="GO" id="GO:0000408">
    <property type="term" value="C:EKC/KEOPS complex"/>
    <property type="evidence" value="ECO:0007669"/>
    <property type="project" value="EnsemblFungi"/>
</dbReference>
<dbReference type="GO" id="GO:0005634">
    <property type="term" value="C:nucleus"/>
    <property type="evidence" value="ECO:0007669"/>
    <property type="project" value="UniProtKB-SubCell"/>
</dbReference>
<dbReference type="GO" id="GO:0005524">
    <property type="term" value="F:ATP binding"/>
    <property type="evidence" value="ECO:0007669"/>
    <property type="project" value="UniProtKB-KW"/>
</dbReference>
<dbReference type="GO" id="GO:0016887">
    <property type="term" value="F:ATP hydrolysis activity"/>
    <property type="evidence" value="ECO:0007669"/>
    <property type="project" value="EnsemblFungi"/>
</dbReference>
<dbReference type="GO" id="GO:0106310">
    <property type="term" value="F:protein serine kinase activity"/>
    <property type="evidence" value="ECO:0007669"/>
    <property type="project" value="RHEA"/>
</dbReference>
<dbReference type="GO" id="GO:0004674">
    <property type="term" value="F:protein serine/threonine kinase activity"/>
    <property type="evidence" value="ECO:0007669"/>
    <property type="project" value="UniProtKB-KW"/>
</dbReference>
<dbReference type="GO" id="GO:0045944">
    <property type="term" value="P:positive regulation of transcription by RNA polymerase II"/>
    <property type="evidence" value="ECO:0007669"/>
    <property type="project" value="EnsemblFungi"/>
</dbReference>
<dbReference type="GO" id="GO:0000722">
    <property type="term" value="P:telomere maintenance via recombination"/>
    <property type="evidence" value="ECO:0007669"/>
    <property type="project" value="EnsemblFungi"/>
</dbReference>
<dbReference type="GO" id="GO:0008033">
    <property type="term" value="P:tRNA processing"/>
    <property type="evidence" value="ECO:0007669"/>
    <property type="project" value="UniProtKB-KW"/>
</dbReference>
<dbReference type="GO" id="GO:0070525">
    <property type="term" value="P:tRNA threonylcarbamoyladenosine metabolic process"/>
    <property type="evidence" value="ECO:0007669"/>
    <property type="project" value="EnsemblFungi"/>
</dbReference>
<dbReference type="FunFam" id="1.10.510.10:FF:000745">
    <property type="entry name" value="Serine/threonine-protein kinase BUD32"/>
    <property type="match status" value="1"/>
</dbReference>
<dbReference type="FunFam" id="3.30.200.20:FF:000639">
    <property type="entry name" value="Serine/threonine-protein kinase BUD32"/>
    <property type="match status" value="1"/>
</dbReference>
<dbReference type="Gene3D" id="3.30.200.20">
    <property type="entry name" value="Phosphorylase Kinase, domain 1"/>
    <property type="match status" value="1"/>
</dbReference>
<dbReference type="Gene3D" id="1.10.510.10">
    <property type="entry name" value="Transferase(Phosphotransferase) domain 1"/>
    <property type="match status" value="1"/>
</dbReference>
<dbReference type="InterPro" id="IPR022495">
    <property type="entry name" value="Bud32"/>
</dbReference>
<dbReference type="InterPro" id="IPR011009">
    <property type="entry name" value="Kinase-like_dom_sf"/>
</dbReference>
<dbReference type="InterPro" id="IPR000719">
    <property type="entry name" value="Prot_kinase_dom"/>
</dbReference>
<dbReference type="InterPro" id="IPR008266">
    <property type="entry name" value="Tyr_kinase_AS"/>
</dbReference>
<dbReference type="NCBIfam" id="TIGR03724">
    <property type="entry name" value="arch_bud32"/>
    <property type="match status" value="1"/>
</dbReference>
<dbReference type="PANTHER" id="PTHR12209:SF0">
    <property type="entry name" value="EKC_KEOPS COMPLEX SUBUNIT TP53RK"/>
    <property type="match status" value="1"/>
</dbReference>
<dbReference type="PANTHER" id="PTHR12209">
    <property type="entry name" value="NON-SPECIFIC SERINE/THREONINE PROTEIN KINASE"/>
    <property type="match status" value="1"/>
</dbReference>
<dbReference type="Pfam" id="PF06293">
    <property type="entry name" value="Kdo"/>
    <property type="match status" value="1"/>
</dbReference>
<dbReference type="SUPFAM" id="SSF56112">
    <property type="entry name" value="Protein kinase-like (PK-like)"/>
    <property type="match status" value="1"/>
</dbReference>
<dbReference type="PROSITE" id="PS50011">
    <property type="entry name" value="PROTEIN_KINASE_DOM"/>
    <property type="match status" value="1"/>
</dbReference>
<dbReference type="PROSITE" id="PS00109">
    <property type="entry name" value="PROTEIN_KINASE_TYR"/>
    <property type="match status" value="1"/>
</dbReference>
<proteinExistence type="inferred from homology"/>
<evidence type="ECO:0000250" key="1">
    <source>
        <dbReference type="UniProtKB" id="P53323"/>
    </source>
</evidence>
<evidence type="ECO:0000250" key="2">
    <source>
        <dbReference type="UniProtKB" id="Q9UYB9"/>
    </source>
</evidence>
<evidence type="ECO:0000255" key="3">
    <source>
        <dbReference type="PROSITE-ProRule" id="PRU00159"/>
    </source>
</evidence>
<evidence type="ECO:0000255" key="4">
    <source>
        <dbReference type="PROSITE-ProRule" id="PRU10028"/>
    </source>
</evidence>
<evidence type="ECO:0000305" key="5"/>
<keyword id="KW-0010">Activator</keyword>
<keyword id="KW-0067">ATP-binding</keyword>
<keyword id="KW-0158">Chromosome</keyword>
<keyword id="KW-0963">Cytoplasm</keyword>
<keyword id="KW-0378">Hydrolase</keyword>
<keyword id="KW-0418">Kinase</keyword>
<keyword id="KW-0547">Nucleotide-binding</keyword>
<keyword id="KW-0539">Nucleus</keyword>
<keyword id="KW-0597">Phosphoprotein</keyword>
<keyword id="KW-1185">Reference proteome</keyword>
<keyword id="KW-0723">Serine/threonine-protein kinase</keyword>
<keyword id="KW-0779">Telomere</keyword>
<keyword id="KW-0804">Transcription</keyword>
<keyword id="KW-0805">Transcription regulation</keyword>
<keyword id="KW-0808">Transferase</keyword>
<keyword id="KW-0819">tRNA processing</keyword>
<organism>
    <name type="scientific">Candida glabrata (strain ATCC 2001 / BCRC 20586 / JCM 3761 / NBRC 0622 / NRRL Y-65 / CBS 138)</name>
    <name type="common">Yeast</name>
    <name type="synonym">Nakaseomyces glabratus</name>
    <dbReference type="NCBI Taxonomy" id="284593"/>
    <lineage>
        <taxon>Eukaryota</taxon>
        <taxon>Fungi</taxon>
        <taxon>Dikarya</taxon>
        <taxon>Ascomycota</taxon>
        <taxon>Saccharomycotina</taxon>
        <taxon>Saccharomycetes</taxon>
        <taxon>Saccharomycetales</taxon>
        <taxon>Saccharomycetaceae</taxon>
        <taxon>Nakaseomyces</taxon>
    </lineage>
</organism>
<sequence>MSQEIVDRVRNYLSPNIPVTPISQGAEAVVFTTSVHPYLPENCNSNEKYIIKYRSPKRYRHPVIDKSLTKHRTLGEARLLSKLYTIEGLHVPKLIACDAYNGYLWLEFLGEDLPENFGYSNLKNFLWMYDAKNDPYCEVVKRALIEVGEQIGKLHWNDYCHGDLTSSNIVMVHSDTDSHHWVPHLIDFGLGSTTTMVEDKGVDIYVLERAILSTHSQHAEQYIEWMLDGFKSVYEKNGKLGKKKLDELLKRFAEVRLRGRKRSMIG</sequence>
<accession>Q6FTW0</accession>
<protein>
    <recommendedName>
        <fullName>EKC/KEOPS complex subunit BUD32</fullName>
        <ecNumber evidence="2">3.6.-.-</ecNumber>
    </recommendedName>
    <alternativeName>
        <fullName>Atypical serine/threonine protein kinase BUD32</fullName>
        <ecNumber evidence="1">2.7.11.1</ecNumber>
    </alternativeName>
</protein>
<comment type="function">
    <text evidence="1">Component of the EKC/KEOPS complex that is required for the formation of a threonylcarbamoyl group on adenosine at position 37 (t(6)A37) in tRNAs that read codons beginning with adenine. The complex is probably involved in the transfer of the threonylcarbamoyl moiety of threonylcarbamoyl-AMP (TC-AMP) to the N6 group of A37. BUD32 has ATPase activity in the context of the EKC/KEOPS complex and likely plays a supporting role to the catalytic subunit KAE1. The EKC/KEOPS complex also promotes both telomere uncapping and telomere elongation. The complex is required for efficient recruitment of transcriptional coactivators.</text>
</comment>
<comment type="catalytic activity">
    <reaction evidence="1">
        <text>L-seryl-[protein] + ATP = O-phospho-L-seryl-[protein] + ADP + H(+)</text>
        <dbReference type="Rhea" id="RHEA:17989"/>
        <dbReference type="Rhea" id="RHEA-COMP:9863"/>
        <dbReference type="Rhea" id="RHEA-COMP:11604"/>
        <dbReference type="ChEBI" id="CHEBI:15378"/>
        <dbReference type="ChEBI" id="CHEBI:29999"/>
        <dbReference type="ChEBI" id="CHEBI:30616"/>
        <dbReference type="ChEBI" id="CHEBI:83421"/>
        <dbReference type="ChEBI" id="CHEBI:456216"/>
        <dbReference type="EC" id="2.7.11.1"/>
    </reaction>
</comment>
<comment type="catalytic activity">
    <reaction evidence="1">
        <text>L-threonyl-[protein] + ATP = O-phospho-L-threonyl-[protein] + ADP + H(+)</text>
        <dbReference type="Rhea" id="RHEA:46608"/>
        <dbReference type="Rhea" id="RHEA-COMP:11060"/>
        <dbReference type="Rhea" id="RHEA-COMP:11605"/>
        <dbReference type="ChEBI" id="CHEBI:15378"/>
        <dbReference type="ChEBI" id="CHEBI:30013"/>
        <dbReference type="ChEBI" id="CHEBI:30616"/>
        <dbReference type="ChEBI" id="CHEBI:61977"/>
        <dbReference type="ChEBI" id="CHEBI:456216"/>
        <dbReference type="EC" id="2.7.11.1"/>
    </reaction>
</comment>
<comment type="subunit">
    <text evidence="1">Component of the EKC/KEOPS complex composed of at least BUD32, CGI121, GON7, KAE1 and PCC1; the whole complex dimerizes.</text>
</comment>
<comment type="subcellular location">
    <subcellularLocation>
        <location evidence="1">Cytoplasm</location>
    </subcellularLocation>
    <subcellularLocation>
        <location evidence="1">Nucleus</location>
    </subcellularLocation>
    <subcellularLocation>
        <location evidence="1">Chromosome</location>
        <location evidence="1">Telomere</location>
    </subcellularLocation>
</comment>
<comment type="domain">
    <text evidence="1 2">This protein is considered an atypical serine/threonine kinase, because it lacks the conventional structural elements necessary for the substrate recognition as well as a lysine residue that in all other serine/threonine kinases participates in the catalytic event (By similarity). BUD32 has protein kinase activity in vitro, but in the context of the EKC/KEOPS complex, the catalytic subunit KAE1 switches the activity of BUD32 from kinase into ATPase (By similarity).</text>
</comment>
<comment type="similarity">
    <text evidence="5">Belongs to the protein kinase superfamily. BUD32 family.</text>
</comment>